<gene>
    <name evidence="1" type="primary">trmFO</name>
    <name type="synonym">gid</name>
    <name type="ordered locus">SPs1022</name>
</gene>
<dbReference type="EC" id="2.1.1.74" evidence="1"/>
<dbReference type="EMBL" id="BA000034">
    <property type="protein sequence ID" value="BAC64117.1"/>
    <property type="status" value="ALT_INIT"/>
    <property type="molecule type" value="Genomic_DNA"/>
</dbReference>
<dbReference type="RefSeq" id="WP_032461335.1">
    <property type="nucleotide sequence ID" value="NC_004606.1"/>
</dbReference>
<dbReference type="SMR" id="P0DB37"/>
<dbReference type="KEGG" id="sps:SPs1022"/>
<dbReference type="HOGENOM" id="CLU_033057_1_0_9"/>
<dbReference type="GO" id="GO:0005829">
    <property type="term" value="C:cytosol"/>
    <property type="evidence" value="ECO:0007669"/>
    <property type="project" value="TreeGrafter"/>
</dbReference>
<dbReference type="GO" id="GO:0050660">
    <property type="term" value="F:flavin adenine dinucleotide binding"/>
    <property type="evidence" value="ECO:0007669"/>
    <property type="project" value="UniProtKB-UniRule"/>
</dbReference>
<dbReference type="GO" id="GO:0047151">
    <property type="term" value="F:tRNA (uracil(54)-C5)-methyltransferase activity, 5,10-methylenetetrahydrofolate-dependent"/>
    <property type="evidence" value="ECO:0007669"/>
    <property type="project" value="UniProtKB-UniRule"/>
</dbReference>
<dbReference type="GO" id="GO:0030488">
    <property type="term" value="P:tRNA methylation"/>
    <property type="evidence" value="ECO:0007669"/>
    <property type="project" value="TreeGrafter"/>
</dbReference>
<dbReference type="GO" id="GO:0002098">
    <property type="term" value="P:tRNA wobble uridine modification"/>
    <property type="evidence" value="ECO:0007669"/>
    <property type="project" value="TreeGrafter"/>
</dbReference>
<dbReference type="FunFam" id="3.50.50.60:FF:000035">
    <property type="entry name" value="Methylenetetrahydrofolate--tRNA-(uracil-5-)-methyltransferase TrmFO"/>
    <property type="match status" value="1"/>
</dbReference>
<dbReference type="FunFam" id="3.50.50.60:FF:000040">
    <property type="entry name" value="Methylenetetrahydrofolate--tRNA-(uracil-5-)-methyltransferase TrmFO"/>
    <property type="match status" value="1"/>
</dbReference>
<dbReference type="Gene3D" id="3.50.50.60">
    <property type="entry name" value="FAD/NAD(P)-binding domain"/>
    <property type="match status" value="2"/>
</dbReference>
<dbReference type="HAMAP" id="MF_01037">
    <property type="entry name" value="TrmFO"/>
    <property type="match status" value="1"/>
</dbReference>
<dbReference type="InterPro" id="IPR036188">
    <property type="entry name" value="FAD/NAD-bd_sf"/>
</dbReference>
<dbReference type="InterPro" id="IPR002218">
    <property type="entry name" value="MnmG-rel"/>
</dbReference>
<dbReference type="InterPro" id="IPR020595">
    <property type="entry name" value="MnmG-rel_CS"/>
</dbReference>
<dbReference type="InterPro" id="IPR040131">
    <property type="entry name" value="MnmG_N"/>
</dbReference>
<dbReference type="InterPro" id="IPR004417">
    <property type="entry name" value="TrmFO"/>
</dbReference>
<dbReference type="NCBIfam" id="TIGR00137">
    <property type="entry name" value="gid_trmFO"/>
    <property type="match status" value="1"/>
</dbReference>
<dbReference type="NCBIfam" id="NF003739">
    <property type="entry name" value="PRK05335.1"/>
    <property type="match status" value="1"/>
</dbReference>
<dbReference type="PANTHER" id="PTHR11806">
    <property type="entry name" value="GLUCOSE INHIBITED DIVISION PROTEIN A"/>
    <property type="match status" value="1"/>
</dbReference>
<dbReference type="PANTHER" id="PTHR11806:SF2">
    <property type="entry name" value="METHYLENETETRAHYDROFOLATE--TRNA-(URACIL-5-)-METHYLTRANSFERASE TRMFO"/>
    <property type="match status" value="1"/>
</dbReference>
<dbReference type="Pfam" id="PF01134">
    <property type="entry name" value="GIDA"/>
    <property type="match status" value="1"/>
</dbReference>
<dbReference type="SUPFAM" id="SSF51905">
    <property type="entry name" value="FAD/NAD(P)-binding domain"/>
    <property type="match status" value="1"/>
</dbReference>
<dbReference type="PROSITE" id="PS01281">
    <property type="entry name" value="GIDA_2"/>
    <property type="match status" value="1"/>
</dbReference>
<sequence>MSQSTATYINVIGAGLAGSEAAYQIAKRGIPVKLYEMRGVKATPQHKTTNFAELVCSNSFRGDSLTNAVGLLKEEMRRLDSIIMRNGEANRVPAGGAMAVDREGYAKSVTAELENHPLIEVIRDEITEIPNDAITVIATGPLTSDALAEKIHAVNGGDGFYFYDAAAPIIDKSTIDMSKVYLKSRYDKGEAAYLNCPMTKEEFMAFHEALTTAEEAPLNSFEKEKYFEGCMPIEVMAKRGIKTMLYGPMKPVGLEYPDDYTGPRDGEFKTPYAVVQLRQDNAAGSLYNIVGFQTHLKWGEQKRVFQMIPGLENAEFVRYGVMHRNSYMDSPNLLTETFQSRSNPNLLFAGQMTGVEGYVESAASGLVAGINAARLFKREEALIFPQTTAIGSLPHYVTHADSKHFQPMNVNFGIIKELEGPRIRDKKERYEAIASRALADLDTCLASL</sequence>
<name>TRMFO_STRPQ</name>
<protein>
    <recommendedName>
        <fullName evidence="1">Methylenetetrahydrofolate--tRNA-(uracil-5-)-methyltransferase TrmFO</fullName>
        <ecNumber evidence="1">2.1.1.74</ecNumber>
    </recommendedName>
    <alternativeName>
        <fullName evidence="1">Folate-dependent tRNA (uracil-5-)-methyltransferase</fullName>
    </alternativeName>
    <alternativeName>
        <fullName evidence="1">Folate-dependent tRNA(M-5-U54)-methyltransferase</fullName>
    </alternativeName>
</protein>
<reference key="1">
    <citation type="journal article" date="2003" name="Genome Res.">
        <title>Genome sequence of an M3 strain of Streptococcus pyogenes reveals a large-scale genomic rearrangement in invasive strains and new insights into phage evolution.</title>
        <authorList>
            <person name="Nakagawa I."/>
            <person name="Kurokawa K."/>
            <person name="Yamashita A."/>
            <person name="Nakata M."/>
            <person name="Tomiyasu Y."/>
            <person name="Okahashi N."/>
            <person name="Kawabata S."/>
            <person name="Yamazaki K."/>
            <person name="Shiba T."/>
            <person name="Yasunaga T."/>
            <person name="Hayashi H."/>
            <person name="Hattori M."/>
            <person name="Hamada S."/>
        </authorList>
    </citation>
    <scope>NUCLEOTIDE SEQUENCE [LARGE SCALE GENOMIC DNA]</scope>
    <source>
        <strain>SSI-1</strain>
    </source>
</reference>
<comment type="function">
    <text evidence="1">Catalyzes the folate-dependent formation of 5-methyl-uridine at position 54 (M-5-U54) in all tRNAs.</text>
</comment>
<comment type="catalytic activity">
    <reaction evidence="1">
        <text>uridine(54) in tRNA + (6R)-5,10-methylene-5,6,7,8-tetrahydrofolate + NADH + H(+) = 5-methyluridine(54) in tRNA + (6S)-5,6,7,8-tetrahydrofolate + NAD(+)</text>
        <dbReference type="Rhea" id="RHEA:16873"/>
        <dbReference type="Rhea" id="RHEA-COMP:10167"/>
        <dbReference type="Rhea" id="RHEA-COMP:10193"/>
        <dbReference type="ChEBI" id="CHEBI:15378"/>
        <dbReference type="ChEBI" id="CHEBI:15636"/>
        <dbReference type="ChEBI" id="CHEBI:57453"/>
        <dbReference type="ChEBI" id="CHEBI:57540"/>
        <dbReference type="ChEBI" id="CHEBI:57945"/>
        <dbReference type="ChEBI" id="CHEBI:65315"/>
        <dbReference type="ChEBI" id="CHEBI:74447"/>
        <dbReference type="EC" id="2.1.1.74"/>
    </reaction>
</comment>
<comment type="catalytic activity">
    <reaction evidence="1">
        <text>uridine(54) in tRNA + (6R)-5,10-methylene-5,6,7,8-tetrahydrofolate + NADPH + H(+) = 5-methyluridine(54) in tRNA + (6S)-5,6,7,8-tetrahydrofolate + NADP(+)</text>
        <dbReference type="Rhea" id="RHEA:62372"/>
        <dbReference type="Rhea" id="RHEA-COMP:10167"/>
        <dbReference type="Rhea" id="RHEA-COMP:10193"/>
        <dbReference type="ChEBI" id="CHEBI:15378"/>
        <dbReference type="ChEBI" id="CHEBI:15636"/>
        <dbReference type="ChEBI" id="CHEBI:57453"/>
        <dbReference type="ChEBI" id="CHEBI:57783"/>
        <dbReference type="ChEBI" id="CHEBI:58349"/>
        <dbReference type="ChEBI" id="CHEBI:65315"/>
        <dbReference type="ChEBI" id="CHEBI:74447"/>
        <dbReference type="EC" id="2.1.1.74"/>
    </reaction>
</comment>
<comment type="cofactor">
    <cofactor evidence="1">
        <name>FAD</name>
        <dbReference type="ChEBI" id="CHEBI:57692"/>
    </cofactor>
</comment>
<comment type="subcellular location">
    <subcellularLocation>
        <location evidence="1">Cytoplasm</location>
    </subcellularLocation>
</comment>
<comment type="similarity">
    <text evidence="1">Belongs to the MnmG family. TrmFO subfamily.</text>
</comment>
<comment type="sequence caution" evidence="2">
    <conflict type="erroneous initiation">
        <sequence resource="EMBL-CDS" id="BAC64117"/>
    </conflict>
</comment>
<proteinExistence type="inferred from homology"/>
<accession>P0DB37</accession>
<accession>Q8K7G4</accession>
<organism>
    <name type="scientific">Streptococcus pyogenes serotype M3 (strain SSI-1)</name>
    <dbReference type="NCBI Taxonomy" id="193567"/>
    <lineage>
        <taxon>Bacteria</taxon>
        <taxon>Bacillati</taxon>
        <taxon>Bacillota</taxon>
        <taxon>Bacilli</taxon>
        <taxon>Lactobacillales</taxon>
        <taxon>Streptococcaceae</taxon>
        <taxon>Streptococcus</taxon>
    </lineage>
</organism>
<evidence type="ECO:0000255" key="1">
    <source>
        <dbReference type="HAMAP-Rule" id="MF_01037"/>
    </source>
</evidence>
<evidence type="ECO:0000305" key="2"/>
<feature type="chain" id="PRO_0000411356" description="Methylenetetrahydrofolate--tRNA-(uracil-5-)-methyltransferase TrmFO">
    <location>
        <begin position="1"/>
        <end position="448"/>
    </location>
</feature>
<feature type="binding site" evidence="1">
    <location>
        <begin position="13"/>
        <end position="18"/>
    </location>
    <ligand>
        <name>FAD</name>
        <dbReference type="ChEBI" id="CHEBI:57692"/>
    </ligand>
</feature>
<keyword id="KW-0963">Cytoplasm</keyword>
<keyword id="KW-0274">FAD</keyword>
<keyword id="KW-0285">Flavoprotein</keyword>
<keyword id="KW-0489">Methyltransferase</keyword>
<keyword id="KW-0520">NAD</keyword>
<keyword id="KW-0521">NADP</keyword>
<keyword id="KW-0808">Transferase</keyword>
<keyword id="KW-0819">tRNA processing</keyword>